<feature type="chain" id="PRO_0000177298" description="Large ribosomal subunit protein bL20c">
    <location>
        <begin position="1"/>
        <end position="114"/>
    </location>
</feature>
<name>RK20_TRICV</name>
<comment type="function">
    <text evidence="1">Binds directly to 23S ribosomal RNA and is necessary for the in vitro assembly process of the 50S ribosomal subunit. It is not involved in the protein synthesizing functions of that subunit (By similarity).</text>
</comment>
<comment type="subcellular location">
    <subcellularLocation>
        <location>Plastid</location>
        <location>Chloroplast</location>
    </subcellularLocation>
</comment>
<comment type="similarity">
    <text evidence="2">Belongs to the bacterial ribosomal protein bL20 family.</text>
</comment>
<protein>
    <recommendedName>
        <fullName evidence="2">Large ribosomal subunit protein bL20c</fullName>
    </recommendedName>
    <alternativeName>
        <fullName>50S ribosomal protein L20, chloroplastic</fullName>
    </alternativeName>
</protein>
<gene>
    <name type="primary">rpl20</name>
</gene>
<organism>
    <name type="scientific">Trieres chinensis</name>
    <name type="common">Marine centric diatom</name>
    <name type="synonym">Odontella sinensis</name>
    <dbReference type="NCBI Taxonomy" id="1514140"/>
    <lineage>
        <taxon>Eukaryota</taxon>
        <taxon>Sar</taxon>
        <taxon>Stramenopiles</taxon>
        <taxon>Ochrophyta</taxon>
        <taxon>Bacillariophyta</taxon>
        <taxon>Mediophyceae</taxon>
        <taxon>Biddulphiophycidae</taxon>
        <taxon>Eupodiscales</taxon>
        <taxon>Parodontellaceae</taxon>
        <taxon>Trieres</taxon>
    </lineage>
</organism>
<reference key="1">
    <citation type="journal article" date="1995" name="Plant Mol. Biol. Rep.">
        <title>The chloroplast genome of a chlorophyll a+c-containing alga, Odontella sinensis.</title>
        <authorList>
            <person name="Kowallik K.V."/>
            <person name="Stoebe B."/>
            <person name="Schaffran I."/>
            <person name="Kroth-Pancic P."/>
            <person name="Freier U."/>
        </authorList>
    </citation>
    <scope>NUCLEOTIDE SEQUENCE [LARGE SCALE GENOMIC DNA]</scope>
</reference>
<geneLocation type="chloroplast"/>
<keyword id="KW-0150">Chloroplast</keyword>
<keyword id="KW-0934">Plastid</keyword>
<keyword id="KW-0687">Ribonucleoprotein</keyword>
<keyword id="KW-0689">Ribosomal protein</keyword>
<keyword id="KW-0694">RNA-binding</keyword>
<keyword id="KW-0699">rRNA-binding</keyword>
<evidence type="ECO:0000250" key="1"/>
<evidence type="ECO:0000305" key="2"/>
<dbReference type="EMBL" id="Z67753">
    <property type="protein sequence ID" value="CAA91670.1"/>
    <property type="molecule type" value="Genomic_DNA"/>
</dbReference>
<dbReference type="PIR" id="S78297">
    <property type="entry name" value="S78297"/>
</dbReference>
<dbReference type="RefSeq" id="NP_043638.1">
    <property type="nucleotide sequence ID" value="NC_001713.1"/>
</dbReference>
<dbReference type="SMR" id="P49556"/>
<dbReference type="GeneID" id="801834"/>
<dbReference type="GO" id="GO:0009507">
    <property type="term" value="C:chloroplast"/>
    <property type="evidence" value="ECO:0007669"/>
    <property type="project" value="UniProtKB-SubCell"/>
</dbReference>
<dbReference type="GO" id="GO:1990904">
    <property type="term" value="C:ribonucleoprotein complex"/>
    <property type="evidence" value="ECO:0007669"/>
    <property type="project" value="UniProtKB-KW"/>
</dbReference>
<dbReference type="GO" id="GO:0005840">
    <property type="term" value="C:ribosome"/>
    <property type="evidence" value="ECO:0007669"/>
    <property type="project" value="UniProtKB-KW"/>
</dbReference>
<dbReference type="GO" id="GO:0019843">
    <property type="term" value="F:rRNA binding"/>
    <property type="evidence" value="ECO:0007669"/>
    <property type="project" value="UniProtKB-UniRule"/>
</dbReference>
<dbReference type="GO" id="GO:0003735">
    <property type="term" value="F:structural constituent of ribosome"/>
    <property type="evidence" value="ECO:0007669"/>
    <property type="project" value="InterPro"/>
</dbReference>
<dbReference type="GO" id="GO:0000027">
    <property type="term" value="P:ribosomal large subunit assembly"/>
    <property type="evidence" value="ECO:0007669"/>
    <property type="project" value="UniProtKB-UniRule"/>
</dbReference>
<dbReference type="GO" id="GO:0006412">
    <property type="term" value="P:translation"/>
    <property type="evidence" value="ECO:0007669"/>
    <property type="project" value="InterPro"/>
</dbReference>
<dbReference type="CDD" id="cd07026">
    <property type="entry name" value="Ribosomal_L20"/>
    <property type="match status" value="1"/>
</dbReference>
<dbReference type="FunFam" id="1.10.1900.20:FF:000001">
    <property type="entry name" value="50S ribosomal protein L20"/>
    <property type="match status" value="1"/>
</dbReference>
<dbReference type="Gene3D" id="6.10.160.10">
    <property type="match status" value="1"/>
</dbReference>
<dbReference type="Gene3D" id="1.10.1900.20">
    <property type="entry name" value="Ribosomal protein L20"/>
    <property type="match status" value="1"/>
</dbReference>
<dbReference type="HAMAP" id="MF_00382">
    <property type="entry name" value="Ribosomal_bL20"/>
    <property type="match status" value="1"/>
</dbReference>
<dbReference type="InterPro" id="IPR005813">
    <property type="entry name" value="Ribosomal_bL20"/>
</dbReference>
<dbReference type="InterPro" id="IPR049946">
    <property type="entry name" value="RIBOSOMAL_L20_CS"/>
</dbReference>
<dbReference type="InterPro" id="IPR035566">
    <property type="entry name" value="Ribosomal_protein_bL20_C"/>
</dbReference>
<dbReference type="NCBIfam" id="TIGR01032">
    <property type="entry name" value="rplT_bact"/>
    <property type="match status" value="1"/>
</dbReference>
<dbReference type="PANTHER" id="PTHR10986">
    <property type="entry name" value="39S RIBOSOMAL PROTEIN L20"/>
    <property type="match status" value="1"/>
</dbReference>
<dbReference type="Pfam" id="PF00453">
    <property type="entry name" value="Ribosomal_L20"/>
    <property type="match status" value="1"/>
</dbReference>
<dbReference type="PRINTS" id="PR00062">
    <property type="entry name" value="RIBOSOMALL20"/>
</dbReference>
<dbReference type="SUPFAM" id="SSF74731">
    <property type="entry name" value="Ribosomal protein L20"/>
    <property type="match status" value="1"/>
</dbReference>
<dbReference type="PROSITE" id="PS00937">
    <property type="entry name" value="RIBOSOMAL_L20"/>
    <property type="match status" value="1"/>
</dbReference>
<sequence>MARVKRGNIARKRAKKILQLAKGYRGAHSRLFRIANQQVMKALRYSYVGRKQKKRVFRKLWITRINAASRLNGLSYSRLIHNFKKSNIELNRKMLSQIAVLDIPTFNQLIAISK</sequence>
<accession>P49556</accession>
<proteinExistence type="inferred from homology"/>